<comment type="function">
    <text evidence="1">Synthesizes selenophosphate from selenide and ATP.</text>
</comment>
<comment type="catalytic activity">
    <reaction evidence="1">
        <text>hydrogenselenide + ATP + H2O = selenophosphate + AMP + phosphate + 2 H(+)</text>
        <dbReference type="Rhea" id="RHEA:18737"/>
        <dbReference type="ChEBI" id="CHEBI:15377"/>
        <dbReference type="ChEBI" id="CHEBI:15378"/>
        <dbReference type="ChEBI" id="CHEBI:16144"/>
        <dbReference type="ChEBI" id="CHEBI:29317"/>
        <dbReference type="ChEBI" id="CHEBI:30616"/>
        <dbReference type="ChEBI" id="CHEBI:43474"/>
        <dbReference type="ChEBI" id="CHEBI:456215"/>
        <dbReference type="EC" id="2.7.9.3"/>
    </reaction>
</comment>
<comment type="cofactor">
    <cofactor evidence="1">
        <name>Mg(2+)</name>
        <dbReference type="ChEBI" id="CHEBI:18420"/>
    </cofactor>
    <text evidence="1">Binds 1 Mg(2+) ion per monomer.</text>
</comment>
<comment type="subunit">
    <text evidence="1">Homodimer.</text>
</comment>
<comment type="similarity">
    <text evidence="1">Belongs to the selenophosphate synthase 1 family. Class I subfamily.</text>
</comment>
<proteinExistence type="inferred from homology"/>
<accession>A4SMM1</accession>
<dbReference type="EC" id="2.7.9.3" evidence="1"/>
<dbReference type="EMBL" id="CP000644">
    <property type="protein sequence ID" value="ABO90143.1"/>
    <property type="molecule type" value="Genomic_DNA"/>
</dbReference>
<dbReference type="SMR" id="A4SMM1"/>
<dbReference type="STRING" id="29491.GCA_000820065_00687"/>
<dbReference type="KEGG" id="asa:ASA_2077"/>
<dbReference type="eggNOG" id="COG0709">
    <property type="taxonomic scope" value="Bacteria"/>
</dbReference>
<dbReference type="HOGENOM" id="CLU_032859_0_1_6"/>
<dbReference type="Proteomes" id="UP000000225">
    <property type="component" value="Chromosome"/>
</dbReference>
<dbReference type="GO" id="GO:0005737">
    <property type="term" value="C:cytoplasm"/>
    <property type="evidence" value="ECO:0007669"/>
    <property type="project" value="TreeGrafter"/>
</dbReference>
<dbReference type="GO" id="GO:0005524">
    <property type="term" value="F:ATP binding"/>
    <property type="evidence" value="ECO:0007669"/>
    <property type="project" value="UniProtKB-UniRule"/>
</dbReference>
<dbReference type="GO" id="GO:0000287">
    <property type="term" value="F:magnesium ion binding"/>
    <property type="evidence" value="ECO:0007669"/>
    <property type="project" value="UniProtKB-UniRule"/>
</dbReference>
<dbReference type="GO" id="GO:0004756">
    <property type="term" value="F:selenide, water dikinase activity"/>
    <property type="evidence" value="ECO:0007669"/>
    <property type="project" value="UniProtKB-UniRule"/>
</dbReference>
<dbReference type="GO" id="GO:0016260">
    <property type="term" value="P:selenocysteine biosynthetic process"/>
    <property type="evidence" value="ECO:0007669"/>
    <property type="project" value="InterPro"/>
</dbReference>
<dbReference type="CDD" id="cd02195">
    <property type="entry name" value="SelD"/>
    <property type="match status" value="1"/>
</dbReference>
<dbReference type="FunFam" id="3.30.1330.10:FF:000003">
    <property type="entry name" value="Selenide, water dikinase"/>
    <property type="match status" value="1"/>
</dbReference>
<dbReference type="FunFam" id="3.90.650.10:FF:000004">
    <property type="entry name" value="Selenide, water dikinase"/>
    <property type="match status" value="1"/>
</dbReference>
<dbReference type="Gene3D" id="3.90.650.10">
    <property type="entry name" value="PurM-like C-terminal domain"/>
    <property type="match status" value="1"/>
</dbReference>
<dbReference type="Gene3D" id="3.30.1330.10">
    <property type="entry name" value="PurM-like, N-terminal domain"/>
    <property type="match status" value="1"/>
</dbReference>
<dbReference type="HAMAP" id="MF_00625">
    <property type="entry name" value="SelD"/>
    <property type="match status" value="1"/>
</dbReference>
<dbReference type="InterPro" id="IPR010918">
    <property type="entry name" value="PurM-like_C_dom"/>
</dbReference>
<dbReference type="InterPro" id="IPR036676">
    <property type="entry name" value="PurM-like_C_sf"/>
</dbReference>
<dbReference type="InterPro" id="IPR016188">
    <property type="entry name" value="PurM-like_N"/>
</dbReference>
<dbReference type="InterPro" id="IPR036921">
    <property type="entry name" value="PurM-like_N_sf"/>
</dbReference>
<dbReference type="InterPro" id="IPR023061">
    <property type="entry name" value="SelD_I"/>
</dbReference>
<dbReference type="InterPro" id="IPR004536">
    <property type="entry name" value="SPS/SelD"/>
</dbReference>
<dbReference type="NCBIfam" id="NF002098">
    <property type="entry name" value="PRK00943.1"/>
    <property type="match status" value="1"/>
</dbReference>
<dbReference type="NCBIfam" id="TIGR00476">
    <property type="entry name" value="selD"/>
    <property type="match status" value="1"/>
</dbReference>
<dbReference type="PANTHER" id="PTHR10256:SF0">
    <property type="entry name" value="INACTIVE SELENIDE, WATER DIKINASE-LIKE PROTEIN-RELATED"/>
    <property type="match status" value="1"/>
</dbReference>
<dbReference type="PANTHER" id="PTHR10256">
    <property type="entry name" value="SELENIDE, WATER DIKINASE"/>
    <property type="match status" value="1"/>
</dbReference>
<dbReference type="Pfam" id="PF00586">
    <property type="entry name" value="AIRS"/>
    <property type="match status" value="1"/>
</dbReference>
<dbReference type="Pfam" id="PF02769">
    <property type="entry name" value="AIRS_C"/>
    <property type="match status" value="1"/>
</dbReference>
<dbReference type="PIRSF" id="PIRSF036407">
    <property type="entry name" value="Selenphspht_syn"/>
    <property type="match status" value="1"/>
</dbReference>
<dbReference type="SUPFAM" id="SSF56042">
    <property type="entry name" value="PurM C-terminal domain-like"/>
    <property type="match status" value="1"/>
</dbReference>
<dbReference type="SUPFAM" id="SSF55326">
    <property type="entry name" value="PurM N-terminal domain-like"/>
    <property type="match status" value="1"/>
</dbReference>
<name>SELD_AERS4</name>
<gene>
    <name evidence="1" type="primary">selD</name>
    <name type="ordered locus">ASA_2077</name>
</gene>
<organism>
    <name type="scientific">Aeromonas salmonicida (strain A449)</name>
    <dbReference type="NCBI Taxonomy" id="382245"/>
    <lineage>
        <taxon>Bacteria</taxon>
        <taxon>Pseudomonadati</taxon>
        <taxon>Pseudomonadota</taxon>
        <taxon>Gammaproteobacteria</taxon>
        <taxon>Aeromonadales</taxon>
        <taxon>Aeromonadaceae</taxon>
        <taxon>Aeromonas</taxon>
    </lineage>
</organism>
<protein>
    <recommendedName>
        <fullName evidence="1">Selenide, water dikinase</fullName>
        <ecNumber evidence="1">2.7.9.3</ecNumber>
    </recommendedName>
    <alternativeName>
        <fullName evidence="1">Selenium donor protein</fullName>
    </alternativeName>
    <alternativeName>
        <fullName evidence="1">Selenophosphate synthase</fullName>
    </alternativeName>
</protein>
<reference key="1">
    <citation type="journal article" date="2008" name="BMC Genomics">
        <title>The genome of Aeromonas salmonicida subsp. salmonicida A449: insights into the evolution of a fish pathogen.</title>
        <authorList>
            <person name="Reith M.E."/>
            <person name="Singh R.K."/>
            <person name="Curtis B."/>
            <person name="Boyd J.M."/>
            <person name="Bouevitch A."/>
            <person name="Kimball J."/>
            <person name="Munholland J."/>
            <person name="Murphy C."/>
            <person name="Sarty D."/>
            <person name="Williams J."/>
            <person name="Nash J.H."/>
            <person name="Johnson S.C."/>
            <person name="Brown L.L."/>
        </authorList>
    </citation>
    <scope>NUCLEOTIDE SEQUENCE [LARGE SCALE GENOMIC DNA]</scope>
    <source>
        <strain>A449</strain>
    </source>
</reference>
<feature type="chain" id="PRO_0000318664" description="Selenide, water dikinase">
    <location>
        <begin position="1"/>
        <end position="345"/>
    </location>
</feature>
<feature type="active site" evidence="1">
    <location>
        <position position="15"/>
    </location>
</feature>
<feature type="binding site" description="in other chain" evidence="1">
    <location>
        <position position="18"/>
    </location>
    <ligand>
        <name>ATP</name>
        <dbReference type="ChEBI" id="CHEBI:30616"/>
        <note>ligand shared between dimeric partners</note>
    </ligand>
</feature>
<feature type="binding site" description="in other chain" evidence="1">
    <location>
        <begin position="46"/>
        <end position="48"/>
    </location>
    <ligand>
        <name>ATP</name>
        <dbReference type="ChEBI" id="CHEBI:30616"/>
        <note>ligand shared between dimeric partners</note>
    </ligand>
</feature>
<feature type="binding site" evidence="1">
    <location>
        <position position="49"/>
    </location>
    <ligand>
        <name>Mg(2+)</name>
        <dbReference type="ChEBI" id="CHEBI:18420"/>
    </ligand>
</feature>
<feature type="binding site" description="in other chain" evidence="1">
    <location>
        <position position="66"/>
    </location>
    <ligand>
        <name>ATP</name>
        <dbReference type="ChEBI" id="CHEBI:30616"/>
        <note>ligand shared between dimeric partners</note>
    </ligand>
</feature>
<feature type="binding site" description="in other chain" evidence="1">
    <location>
        <position position="89"/>
    </location>
    <ligand>
        <name>ATP</name>
        <dbReference type="ChEBI" id="CHEBI:30616"/>
        <note>ligand shared between dimeric partners</note>
    </ligand>
</feature>
<feature type="binding site" evidence="1">
    <location>
        <position position="89"/>
    </location>
    <ligand>
        <name>Mg(2+)</name>
        <dbReference type="ChEBI" id="CHEBI:18420"/>
    </ligand>
</feature>
<feature type="binding site" evidence="1">
    <location>
        <begin position="137"/>
        <end position="139"/>
    </location>
    <ligand>
        <name>ATP</name>
        <dbReference type="ChEBI" id="CHEBI:30616"/>
        <note>ligand shared between dimeric partners</note>
    </ligand>
</feature>
<feature type="binding site" evidence="1">
    <location>
        <position position="225"/>
    </location>
    <ligand>
        <name>Mg(2+)</name>
        <dbReference type="ChEBI" id="CHEBI:18420"/>
    </ligand>
</feature>
<feature type="site" description="Important for catalytic activity" evidence="1">
    <location>
        <position position="18"/>
    </location>
</feature>
<sequence length="345" mass="36098">MSSIRLTQYSHGAGCGCKISPKVLDTILKSQIPGFDDPTLVVGNSSKDDAAVVDIGNGQGIVSTTDFFMPIVDDPFTFGRIAATNAISDIYAMGGKPIVAIAILGWPINTLAPEIAQQVIDGGRQVCHEAGISLAGGHSIDAPEPIFGLAVTGIVPLDAIKQNDTAQAGDILYLTKPLGIGILTTAQKKGKLKPEHEQLAPNAMCTLNKIGQRFAELPGVHAMTDVTGFGLAGHLLEMCEGSGVCATLDFKALPLLDEVDYYLSEGCVPGGTLRNFDSYGAKLGAMDERTRNIMCDPQTSGGLLVAVGKESEAELLAIATQAGLTLSPIGQLKAYTGNQFIEVIQ</sequence>
<evidence type="ECO:0000255" key="1">
    <source>
        <dbReference type="HAMAP-Rule" id="MF_00625"/>
    </source>
</evidence>
<keyword id="KW-0067">ATP-binding</keyword>
<keyword id="KW-0418">Kinase</keyword>
<keyword id="KW-0460">Magnesium</keyword>
<keyword id="KW-0479">Metal-binding</keyword>
<keyword id="KW-0547">Nucleotide-binding</keyword>
<keyword id="KW-0711">Selenium</keyword>
<keyword id="KW-0808">Transferase</keyword>